<sequence length="96" mass="11306">MGCRDILLTFSVALLLISLFQIWLFREGRQVPELSDDQLGKDRNTLMTSKNKNKNEDVQRLFQRYFKGRSFGLNNTNSRFEDSNRRIPSSPDRLHN</sequence>
<proteinExistence type="evidence at transcript level"/>
<accession>Q6IWB1</accession>
<accession>A0MDN3</accession>
<name>CLE43_ARATH</name>
<dbReference type="EMBL" id="AY618656">
    <property type="protein sequence ID" value="AAT36742.1"/>
    <property type="molecule type" value="Genomic_DNA"/>
</dbReference>
<dbReference type="EMBL" id="AC079281">
    <property type="status" value="NOT_ANNOTATED_CDS"/>
    <property type="molecule type" value="Genomic_DNA"/>
</dbReference>
<dbReference type="EMBL" id="CP002684">
    <property type="protein sequence ID" value="AEE30624.1"/>
    <property type="molecule type" value="Genomic_DNA"/>
</dbReference>
<dbReference type="EMBL" id="DQ487497">
    <property type="protein sequence ID" value="ABF59326.1"/>
    <property type="molecule type" value="Genomic_DNA"/>
</dbReference>
<dbReference type="EMBL" id="DQ652649">
    <property type="protein sequence ID" value="ABK28016.1"/>
    <property type="status" value="ALT_SEQ"/>
    <property type="molecule type" value="Genomic_DNA"/>
</dbReference>
<dbReference type="EMBL" id="EF182921">
    <property type="status" value="NOT_ANNOTATED_CDS"/>
    <property type="molecule type" value="mRNA"/>
</dbReference>
<dbReference type="RefSeq" id="NP_001319079.1">
    <property type="nucleotide sequence ID" value="NM_001332680.1"/>
</dbReference>
<dbReference type="FunCoup" id="Q6IWB1">
    <property type="interactions" value="25"/>
</dbReference>
<dbReference type="STRING" id="3702.Q6IWB1"/>
<dbReference type="GlyCosmos" id="Q6IWB1">
    <property type="glycosylation" value="2 sites, No reported glycans"/>
</dbReference>
<dbReference type="GlyGen" id="Q6IWB1">
    <property type="glycosylation" value="1 site"/>
</dbReference>
<dbReference type="PaxDb" id="3702-AT1G25425.1"/>
<dbReference type="EnsemblPlants" id="AT1G25425.1">
    <property type="protein sequence ID" value="AT1G25425.1"/>
    <property type="gene ID" value="AT1G25425"/>
</dbReference>
<dbReference type="GeneID" id="28717267"/>
<dbReference type="Gramene" id="AT1G25425.1">
    <property type="protein sequence ID" value="AT1G25425.1"/>
    <property type="gene ID" value="AT1G25425"/>
</dbReference>
<dbReference type="KEGG" id="ath:AT1G25425"/>
<dbReference type="Araport" id="AT1G25425"/>
<dbReference type="TAIR" id="AT1G25425">
    <property type="gene designation" value="CLE43"/>
</dbReference>
<dbReference type="HOGENOM" id="CLU_2457917_0_0_1"/>
<dbReference type="InParanoid" id="Q6IWB1"/>
<dbReference type="OMA" id="NNTRFED"/>
<dbReference type="OrthoDB" id="1298458at2759"/>
<dbReference type="PhylomeDB" id="Q6IWB1"/>
<dbReference type="PRO" id="PR:Q6IWB1"/>
<dbReference type="Proteomes" id="UP000006548">
    <property type="component" value="Chromosome 1"/>
</dbReference>
<dbReference type="ExpressionAtlas" id="Q6IWB1">
    <property type="expression patterns" value="baseline and differential"/>
</dbReference>
<dbReference type="GO" id="GO:0048046">
    <property type="term" value="C:apoplast"/>
    <property type="evidence" value="ECO:0000250"/>
    <property type="project" value="UniProtKB"/>
</dbReference>
<dbReference type="GO" id="GO:0033612">
    <property type="term" value="F:receptor serine/threonine kinase binding"/>
    <property type="evidence" value="ECO:0000250"/>
    <property type="project" value="UniProtKB"/>
</dbReference>
<dbReference type="GO" id="GO:0045168">
    <property type="term" value="P:cell-cell signaling involved in cell fate commitment"/>
    <property type="evidence" value="ECO:0000250"/>
    <property type="project" value="UniProtKB"/>
</dbReference>
<dbReference type="InterPro" id="IPR040274">
    <property type="entry name" value="CLE27/CLE43"/>
</dbReference>
<dbReference type="PANTHER" id="PTHR37184">
    <property type="entry name" value="CLAVATA3/ESR (CLE)-RELATED PROTEIN 27"/>
    <property type="match status" value="1"/>
</dbReference>
<dbReference type="PANTHER" id="PTHR37184:SF2">
    <property type="entry name" value="CLAVATA3_ESR (CLE)-RELATED PROTEIN 43"/>
    <property type="match status" value="1"/>
</dbReference>
<keyword id="KW-0217">Developmental protein</keyword>
<keyword id="KW-0221">Differentiation</keyword>
<keyword id="KW-0325">Glycoprotein</keyword>
<keyword id="KW-0379">Hydroxylation</keyword>
<keyword id="KW-1185">Reference proteome</keyword>
<keyword id="KW-0964">Secreted</keyword>
<keyword id="KW-0732">Signal</keyword>
<evidence type="ECO:0000250" key="1">
    <source>
        <dbReference type="UniProtKB" id="O49519"/>
    </source>
</evidence>
<evidence type="ECO:0000250" key="2">
    <source>
        <dbReference type="UniProtKB" id="Q6IWA9"/>
    </source>
</evidence>
<evidence type="ECO:0000255" key="3"/>
<evidence type="ECO:0000255" key="4">
    <source>
        <dbReference type="PROSITE-ProRule" id="PRU00498"/>
    </source>
</evidence>
<evidence type="ECO:0000256" key="5">
    <source>
        <dbReference type="SAM" id="MobiDB-lite"/>
    </source>
</evidence>
<evidence type="ECO:0000269" key="6">
    <source>
    </source>
</evidence>
<evidence type="ECO:0000269" key="7">
    <source>
    </source>
</evidence>
<evidence type="ECO:0000303" key="8">
    <source>
    </source>
</evidence>
<evidence type="ECO:0000303" key="9">
    <source>
    </source>
</evidence>
<evidence type="ECO:0000305" key="10"/>
<evidence type="ECO:0000312" key="11">
    <source>
        <dbReference type="Araport" id="AT1G25425"/>
    </source>
</evidence>
<evidence type="ECO:0000312" key="12">
    <source>
        <dbReference type="EMBL" id="AC079281"/>
    </source>
</evidence>
<comment type="function">
    <molecule>CLE43p</molecule>
    <text evidence="2 7">Extracellular signal peptide that regulates cell fate (By similarity). Promotes pollen tube growth prolongation in a SKM1 and SKM2-dependent manner, especially under relatively high temperature (at 30 degrees Celsius), thus conferring tolerance against high temperature probably through the maintenance of mitochondrial activity (PubMed:23910659).</text>
</comment>
<comment type="subcellular location">
    <molecule>CLE43p</molecule>
    <subcellularLocation>
        <location evidence="1">Secreted</location>
        <location evidence="1">Extracellular space</location>
    </subcellularLocation>
</comment>
<comment type="tissue specificity">
    <molecule>CLE43p</molecule>
    <text evidence="6">Expressed at low levels in seedlings.</text>
</comment>
<comment type="PTM">
    <molecule>CLE43p</molecule>
    <text evidence="1">The O-glycosylation (arabinosylation) of the hydroxyproline Pro-91 enhances binding affinity of the CLE43p peptide for its receptor.</text>
</comment>
<comment type="similarity">
    <text evidence="10">Belongs to the CLV3/ESR signal peptide family.</text>
</comment>
<comment type="sequence caution" evidence="10">
    <conflict type="erroneous termination">
        <sequence resource="EMBL-CDS" id="ABK28016"/>
    </conflict>
    <text>Extended C-terminus.</text>
</comment>
<reference key="1">
    <citation type="journal article" date="2006" name="Plant Physiol.">
        <title>Gain-of-function phenotypes of many CLAVATA3/ESR genes, including four new family members, correlate with tandem variations in the conserved CLAVATA3/ESR domain.</title>
        <authorList>
            <person name="Strabala T.J."/>
            <person name="O'donnell P.J."/>
            <person name="Smit A.-M."/>
            <person name="Ampomah-Dwamena C."/>
            <person name="Martin E.J."/>
            <person name="Netzler N."/>
            <person name="Nieuwenhuizen N.J."/>
            <person name="Quinn B.D."/>
            <person name="Foote H.C.C."/>
            <person name="Hudson K.R."/>
        </authorList>
    </citation>
    <scope>NUCLEOTIDE SEQUENCE [GENOMIC DNA]</scope>
    <scope>TISSUE SPECIFICITY</scope>
    <scope>GENE FAMILY</scope>
    <source>
        <strain>cv. Columbia</strain>
    </source>
</reference>
<reference key="2">
    <citation type="journal article" date="2000" name="Nature">
        <title>Sequence and analysis of chromosome 1 of the plant Arabidopsis thaliana.</title>
        <authorList>
            <person name="Theologis A."/>
            <person name="Ecker J.R."/>
            <person name="Palm C.J."/>
            <person name="Federspiel N.A."/>
            <person name="Kaul S."/>
            <person name="White O."/>
            <person name="Alonso J."/>
            <person name="Altafi H."/>
            <person name="Araujo R."/>
            <person name="Bowman C.L."/>
            <person name="Brooks S.Y."/>
            <person name="Buehler E."/>
            <person name="Chan A."/>
            <person name="Chao Q."/>
            <person name="Chen H."/>
            <person name="Cheuk R.F."/>
            <person name="Chin C.W."/>
            <person name="Chung M.K."/>
            <person name="Conn L."/>
            <person name="Conway A.B."/>
            <person name="Conway A.R."/>
            <person name="Creasy T.H."/>
            <person name="Dewar K."/>
            <person name="Dunn P."/>
            <person name="Etgu P."/>
            <person name="Feldblyum T.V."/>
            <person name="Feng J.-D."/>
            <person name="Fong B."/>
            <person name="Fujii C.Y."/>
            <person name="Gill J.E."/>
            <person name="Goldsmith A.D."/>
            <person name="Haas B."/>
            <person name="Hansen N.F."/>
            <person name="Hughes B."/>
            <person name="Huizar L."/>
            <person name="Hunter J.L."/>
            <person name="Jenkins J."/>
            <person name="Johnson-Hopson C."/>
            <person name="Khan S."/>
            <person name="Khaykin E."/>
            <person name="Kim C.J."/>
            <person name="Koo H.L."/>
            <person name="Kremenetskaia I."/>
            <person name="Kurtz D.B."/>
            <person name="Kwan A."/>
            <person name="Lam B."/>
            <person name="Langin-Hooper S."/>
            <person name="Lee A."/>
            <person name="Lee J.M."/>
            <person name="Lenz C.A."/>
            <person name="Li J.H."/>
            <person name="Li Y.-P."/>
            <person name="Lin X."/>
            <person name="Liu S.X."/>
            <person name="Liu Z.A."/>
            <person name="Luros J.S."/>
            <person name="Maiti R."/>
            <person name="Marziali A."/>
            <person name="Militscher J."/>
            <person name="Miranda M."/>
            <person name="Nguyen M."/>
            <person name="Nierman W.C."/>
            <person name="Osborne B.I."/>
            <person name="Pai G."/>
            <person name="Peterson J."/>
            <person name="Pham P.K."/>
            <person name="Rizzo M."/>
            <person name="Rooney T."/>
            <person name="Rowley D."/>
            <person name="Sakano H."/>
            <person name="Salzberg S.L."/>
            <person name="Schwartz J.R."/>
            <person name="Shinn P."/>
            <person name="Southwick A.M."/>
            <person name="Sun H."/>
            <person name="Tallon L.J."/>
            <person name="Tambunga G."/>
            <person name="Toriumi M.J."/>
            <person name="Town C.D."/>
            <person name="Utterback T."/>
            <person name="Van Aken S."/>
            <person name="Vaysberg M."/>
            <person name="Vysotskaia V.S."/>
            <person name="Walker M."/>
            <person name="Wu D."/>
            <person name="Yu G."/>
            <person name="Fraser C.M."/>
            <person name="Venter J.C."/>
            <person name="Davis R.W."/>
        </authorList>
    </citation>
    <scope>NUCLEOTIDE SEQUENCE [LARGE SCALE GENOMIC DNA]</scope>
    <source>
        <strain>cv. Columbia</strain>
    </source>
</reference>
<reference key="3">
    <citation type="journal article" date="2017" name="Plant J.">
        <title>Araport11: a complete reannotation of the Arabidopsis thaliana reference genome.</title>
        <authorList>
            <person name="Cheng C.Y."/>
            <person name="Krishnakumar V."/>
            <person name="Chan A.P."/>
            <person name="Thibaud-Nissen F."/>
            <person name="Schobel S."/>
            <person name="Town C.D."/>
        </authorList>
    </citation>
    <scope>GENOME REANNOTATION</scope>
    <source>
        <strain>cv. Columbia</strain>
    </source>
</reference>
<reference key="4">
    <citation type="journal article" date="2006" name="Plant Biotechnol. J.">
        <title>Simultaneous high-throughput recombinational cloning of open reading frames in closed and open configurations.</title>
        <authorList>
            <person name="Underwood B.A."/>
            <person name="Vanderhaeghen R."/>
            <person name="Whitford R."/>
            <person name="Town C.D."/>
            <person name="Hilson P."/>
        </authorList>
    </citation>
    <scope>NUCLEOTIDE SEQUENCE [LARGE SCALE GENOMIC DNA]</scope>
    <source>
        <strain>cv. Columbia</strain>
    </source>
</reference>
<reference key="5">
    <citation type="journal article" date="2007" name="BMC Genomics">
        <title>Experimental validation of novel genes predicted in the un-annotated regions of the Arabidopsis genome.</title>
        <authorList>
            <person name="Moskal W.A. Jr."/>
            <person name="Wu H.C."/>
            <person name="Underwood B.A."/>
            <person name="Wang W."/>
            <person name="Town C.D."/>
            <person name="Xiao Y.-L."/>
        </authorList>
    </citation>
    <scope>NUCLEOTIDE SEQUENCE [LARGE SCALE MRNA]</scope>
    <source>
        <strain>cv. Columbia</strain>
    </source>
</reference>
<reference key="6">
    <citation type="journal article" date="2008" name="Cell. Mol. Life Sci.">
        <title>The CLE family of plant polypeptide signaling molecules.</title>
        <authorList>
            <person name="Jun J.H."/>
            <person name="Fiume E."/>
            <person name="Fletcher J.C."/>
        </authorList>
    </citation>
    <scope>REVIEW</scope>
</reference>
<reference key="7">
    <citation type="journal article" date="2008" name="Curr. Opin. Plant Biol.">
        <title>Diverse and conserved roles of CLE peptides.</title>
        <authorList>
            <person name="Mitchum M.G."/>
            <person name="Wang X."/>
            <person name="Davis E.L."/>
        </authorList>
    </citation>
    <scope>REVIEW</scope>
</reference>
<reference key="8">
    <citation type="journal article" date="2010" name="Protoplasma">
        <title>CLE peptide signaling during plant development.</title>
        <authorList>
            <person name="Wang G."/>
            <person name="Fiers M."/>
        </authorList>
    </citation>
    <scope>REVIEW</scope>
</reference>
<reference key="9">
    <citation type="journal article" date="2013" name="Curr. Biol.">
        <title>A novel pollen-pistil interaction conferring high-temperature tolerance during reproduction via CLE45 signaling.</title>
        <authorList>
            <person name="Endo S."/>
            <person name="Shinohara H."/>
            <person name="Matsubayashi Y."/>
            <person name="Fukuda H."/>
        </authorList>
    </citation>
    <scope>FUNCTION</scope>
</reference>
<protein>
    <recommendedName>
        <fullName evidence="8 9">CLAVATA3/ESR (CLE)-related protein 43</fullName>
    </recommendedName>
    <component>
        <recommendedName>
            <fullName evidence="8 9">CLE43p</fullName>
        </recommendedName>
    </component>
</protein>
<gene>
    <name evidence="8 9" type="primary">CLE43</name>
    <name evidence="11" type="ordered locus">At1g25425</name>
    <name evidence="12" type="ORF">F2J7</name>
</gene>
<organism>
    <name type="scientific">Arabidopsis thaliana</name>
    <name type="common">Mouse-ear cress</name>
    <dbReference type="NCBI Taxonomy" id="3702"/>
    <lineage>
        <taxon>Eukaryota</taxon>
        <taxon>Viridiplantae</taxon>
        <taxon>Streptophyta</taxon>
        <taxon>Embryophyta</taxon>
        <taxon>Tracheophyta</taxon>
        <taxon>Spermatophyta</taxon>
        <taxon>Magnoliopsida</taxon>
        <taxon>eudicotyledons</taxon>
        <taxon>Gunneridae</taxon>
        <taxon>Pentapetalae</taxon>
        <taxon>rosids</taxon>
        <taxon>malvids</taxon>
        <taxon>Brassicales</taxon>
        <taxon>Brassicaceae</taxon>
        <taxon>Camelineae</taxon>
        <taxon>Arabidopsis</taxon>
    </lineage>
</organism>
<feature type="signal peptide" evidence="3">
    <location>
        <begin position="1"/>
        <end position="28"/>
    </location>
</feature>
<feature type="chain" id="PRO_5000093475" description="CLAVATA3/ESR (CLE)-related protein 43">
    <location>
        <begin position="29"/>
        <end position="96"/>
    </location>
</feature>
<feature type="peptide" id="PRO_0000401286" description="CLE43p" evidence="1">
    <location>
        <begin position="85"/>
        <end position="96"/>
    </location>
</feature>
<feature type="region of interest" description="Disordered" evidence="5">
    <location>
        <begin position="71"/>
        <end position="96"/>
    </location>
</feature>
<feature type="modified residue" description="Hydroxyproline" evidence="1">
    <location>
        <position position="88"/>
    </location>
</feature>
<feature type="modified residue" description="Hydroxyproline" evidence="1">
    <location>
        <position position="91"/>
    </location>
</feature>
<feature type="glycosylation site" description="N-linked (GlcNAc...) asparagine" evidence="4">
    <location>
        <position position="74"/>
    </location>
</feature>
<feature type="glycosylation site" description="O-linked (Ara...) hydroxyproline" evidence="1">
    <location>
        <position position="91"/>
    </location>
</feature>